<protein>
    <recommendedName>
        <fullName evidence="1">Small ribosomal subunit protein eS31</fullName>
    </recommendedName>
    <alternativeName>
        <fullName evidence="2">30S ribosomal protein S27ae</fullName>
    </alternativeName>
</protein>
<keyword id="KW-0479">Metal-binding</keyword>
<keyword id="KW-1185">Reference proteome</keyword>
<keyword id="KW-0687">Ribonucleoprotein</keyword>
<keyword id="KW-0689">Ribosomal protein</keyword>
<keyword id="KW-0862">Zinc</keyword>
<keyword id="KW-0863">Zinc-finger</keyword>
<evidence type="ECO:0000255" key="1">
    <source>
        <dbReference type="HAMAP-Rule" id="MF_00777"/>
    </source>
</evidence>
<evidence type="ECO:0000305" key="2"/>
<dbReference type="EMBL" id="L77117">
    <property type="protein sequence ID" value="AAB98383.1"/>
    <property type="molecule type" value="Genomic_DNA"/>
</dbReference>
<dbReference type="PIR" id="A64349">
    <property type="entry name" value="A64349"/>
</dbReference>
<dbReference type="RefSeq" id="WP_010869892.1">
    <property type="nucleotide sequence ID" value="NC_000909.1"/>
</dbReference>
<dbReference type="SMR" id="P54031"/>
<dbReference type="FunCoup" id="P54031">
    <property type="interactions" value="61"/>
</dbReference>
<dbReference type="STRING" id="243232.MJ_0393"/>
<dbReference type="PaxDb" id="243232-MJ_0393"/>
<dbReference type="EnsemblBacteria" id="AAB98383">
    <property type="protein sequence ID" value="AAB98383"/>
    <property type="gene ID" value="MJ_0393"/>
</dbReference>
<dbReference type="GeneID" id="1451250"/>
<dbReference type="KEGG" id="mja:MJ_0393"/>
<dbReference type="eggNOG" id="arCOG04183">
    <property type="taxonomic scope" value="Archaea"/>
</dbReference>
<dbReference type="HOGENOM" id="CLU_179743_2_0_2"/>
<dbReference type="InParanoid" id="P54031"/>
<dbReference type="OrthoDB" id="25142at2157"/>
<dbReference type="PhylomeDB" id="P54031"/>
<dbReference type="Proteomes" id="UP000000805">
    <property type="component" value="Chromosome"/>
</dbReference>
<dbReference type="GO" id="GO:1990904">
    <property type="term" value="C:ribonucleoprotein complex"/>
    <property type="evidence" value="ECO:0007669"/>
    <property type="project" value="UniProtKB-KW"/>
</dbReference>
<dbReference type="GO" id="GO:0005840">
    <property type="term" value="C:ribosome"/>
    <property type="evidence" value="ECO:0007669"/>
    <property type="project" value="UniProtKB-KW"/>
</dbReference>
<dbReference type="GO" id="GO:0003735">
    <property type="term" value="F:structural constituent of ribosome"/>
    <property type="evidence" value="ECO:0007669"/>
    <property type="project" value="InterPro"/>
</dbReference>
<dbReference type="GO" id="GO:0008270">
    <property type="term" value="F:zinc ion binding"/>
    <property type="evidence" value="ECO:0007669"/>
    <property type="project" value="UniProtKB-UniRule"/>
</dbReference>
<dbReference type="GO" id="GO:0006412">
    <property type="term" value="P:translation"/>
    <property type="evidence" value="ECO:0007669"/>
    <property type="project" value="UniProtKB-UniRule"/>
</dbReference>
<dbReference type="Gene3D" id="6.20.50.180">
    <property type="match status" value="1"/>
</dbReference>
<dbReference type="HAMAP" id="MF_00777">
    <property type="entry name" value="Ribosomal_eS31"/>
    <property type="match status" value="1"/>
</dbReference>
<dbReference type="InterPro" id="IPR002906">
    <property type="entry name" value="Ribosomal_eS31"/>
</dbReference>
<dbReference type="InterPro" id="IPR022845">
    <property type="entry name" value="Ribosomal_eS31_arc"/>
</dbReference>
<dbReference type="InterPro" id="IPR011332">
    <property type="entry name" value="Ribosomal_zn-bd"/>
</dbReference>
<dbReference type="NCBIfam" id="NF001669">
    <property type="entry name" value="PRK00432.1"/>
    <property type="match status" value="1"/>
</dbReference>
<dbReference type="Pfam" id="PF01599">
    <property type="entry name" value="Ribosomal_S27"/>
    <property type="match status" value="1"/>
</dbReference>
<dbReference type="SMART" id="SM01402">
    <property type="entry name" value="Ribosomal_S27"/>
    <property type="match status" value="1"/>
</dbReference>
<dbReference type="SUPFAM" id="SSF57829">
    <property type="entry name" value="Zn-binding ribosomal proteins"/>
    <property type="match status" value="1"/>
</dbReference>
<comment type="cofactor">
    <cofactor evidence="1">
        <name>Zn(2+)</name>
        <dbReference type="ChEBI" id="CHEBI:29105"/>
    </cofactor>
    <text evidence="1">Binds 1 zinc ion per subunit.</text>
</comment>
<comment type="subunit">
    <text evidence="1">Part of the 30S ribosomal subunit.</text>
</comment>
<comment type="similarity">
    <text evidence="1">Belongs to the eukaryotic ribosomal protein eS31 family.</text>
</comment>
<feature type="chain" id="PRO_0000137694" description="Small ribosomal subunit protein eS31">
    <location>
        <begin position="1"/>
        <end position="60"/>
    </location>
</feature>
<feature type="zinc finger region" description="C4-type" evidence="1">
    <location>
        <begin position="27"/>
        <end position="48"/>
    </location>
</feature>
<feature type="binding site" evidence="1">
    <location>
        <position position="27"/>
    </location>
    <ligand>
        <name>Zn(2+)</name>
        <dbReference type="ChEBI" id="CHEBI:29105"/>
    </ligand>
</feature>
<feature type="binding site" evidence="1">
    <location>
        <position position="30"/>
    </location>
    <ligand>
        <name>Zn(2+)</name>
        <dbReference type="ChEBI" id="CHEBI:29105"/>
    </ligand>
</feature>
<feature type="binding site" evidence="1">
    <location>
        <position position="45"/>
    </location>
    <ligand>
        <name>Zn(2+)</name>
        <dbReference type="ChEBI" id="CHEBI:29105"/>
    </ligand>
</feature>
<feature type="binding site" evidence="1">
    <location>
        <position position="48"/>
    </location>
    <ligand>
        <name>Zn(2+)</name>
        <dbReference type="ChEBI" id="CHEBI:29105"/>
    </ligand>
</feature>
<proteinExistence type="inferred from homology"/>
<gene>
    <name evidence="1" type="primary">rps27ae</name>
    <name type="ordered locus">MJ0393</name>
</gene>
<accession>P54031</accession>
<organism>
    <name type="scientific">Methanocaldococcus jannaschii (strain ATCC 43067 / DSM 2661 / JAL-1 / JCM 10045 / NBRC 100440)</name>
    <name type="common">Methanococcus jannaschii</name>
    <dbReference type="NCBI Taxonomy" id="243232"/>
    <lineage>
        <taxon>Archaea</taxon>
        <taxon>Methanobacteriati</taxon>
        <taxon>Methanobacteriota</taxon>
        <taxon>Methanomada group</taxon>
        <taxon>Methanococci</taxon>
        <taxon>Methanococcales</taxon>
        <taxon>Methanocaldococcaceae</taxon>
        <taxon>Methanocaldococcus</taxon>
    </lineage>
</organism>
<name>RS27A_METJA</name>
<reference key="1">
    <citation type="journal article" date="1996" name="Science">
        <title>Complete genome sequence of the methanogenic archaeon, Methanococcus jannaschii.</title>
        <authorList>
            <person name="Bult C.J."/>
            <person name="White O."/>
            <person name="Olsen G.J."/>
            <person name="Zhou L."/>
            <person name="Fleischmann R.D."/>
            <person name="Sutton G.G."/>
            <person name="Blake J.A."/>
            <person name="FitzGerald L.M."/>
            <person name="Clayton R.A."/>
            <person name="Gocayne J.D."/>
            <person name="Kerlavage A.R."/>
            <person name="Dougherty B.A."/>
            <person name="Tomb J.-F."/>
            <person name="Adams M.D."/>
            <person name="Reich C.I."/>
            <person name="Overbeek R."/>
            <person name="Kirkness E.F."/>
            <person name="Weinstock K.G."/>
            <person name="Merrick J.M."/>
            <person name="Glodek A."/>
            <person name="Scott J.L."/>
            <person name="Geoghagen N.S.M."/>
            <person name="Weidman J.F."/>
            <person name="Fuhrmann J.L."/>
            <person name="Nguyen D."/>
            <person name="Utterback T.R."/>
            <person name="Kelley J.M."/>
            <person name="Peterson J.D."/>
            <person name="Sadow P.W."/>
            <person name="Hanna M.C."/>
            <person name="Cotton M.D."/>
            <person name="Roberts K.M."/>
            <person name="Hurst M.A."/>
            <person name="Kaine B.P."/>
            <person name="Borodovsky M."/>
            <person name="Klenk H.-P."/>
            <person name="Fraser C.M."/>
            <person name="Smith H.O."/>
            <person name="Woese C.R."/>
            <person name="Venter J.C."/>
        </authorList>
    </citation>
    <scope>NUCLEOTIDE SEQUENCE [LARGE SCALE GENOMIC DNA]</scope>
    <source>
        <strain>ATCC 43067 / DSM 2661 / JAL-1 / JCM 10045 / NBRC 100440</strain>
    </source>
</reference>
<sequence length="60" mass="7048">MTKGKKTAKYKYYKIEGDKVIRLKKTCPRCGPGVFMAEHLNRYACGKCGYMEWKQPQKKE</sequence>